<protein>
    <recommendedName>
        <fullName>Uncharacterized 15.1 kDa protein in e-segB intergenic region</fullName>
    </recommendedName>
</protein>
<reference key="1">
    <citation type="submission" date="1994-08" db="EMBL/GenBank/DDBJ databases">
        <title>Analysis of the region between lysozyme and the tRNA genes of bacteriophage T4.</title>
        <authorList>
            <person name="Anderson B."/>
            <person name="Zurabishvili T."/>
            <person name="Marusich E."/>
            <person name="Schneider M."/>
            <person name="Mullins T."/>
            <person name="Napuli A."/>
            <person name="Mesyanzhinov V.V."/>
            <person name="Neitzel J."/>
            <person name="Kutter E."/>
        </authorList>
    </citation>
    <scope>NUCLEOTIDE SEQUENCE [GENOMIC DNA]</scope>
    <source>
        <strain>D</strain>
    </source>
</reference>
<reference key="2">
    <citation type="journal article" date="2003" name="Microbiol. Mol. Biol. Rev.">
        <title>Bacteriophage T4 genome.</title>
        <authorList>
            <person name="Miller E.S."/>
            <person name="Kutter E."/>
            <person name="Mosig G."/>
            <person name="Arisaka F."/>
            <person name="Kunisawa T."/>
            <person name="Ruger W."/>
        </authorList>
    </citation>
    <scope>NUCLEOTIDE SEQUENCE [LARGE SCALE GENOMIC DNA]</scope>
</reference>
<organism>
    <name type="scientific">Enterobacteria phage T4</name>
    <name type="common">Bacteriophage T4</name>
    <dbReference type="NCBI Taxonomy" id="10665"/>
    <lineage>
        <taxon>Viruses</taxon>
        <taxon>Duplodnaviria</taxon>
        <taxon>Heunggongvirae</taxon>
        <taxon>Uroviricota</taxon>
        <taxon>Caudoviricetes</taxon>
        <taxon>Straboviridae</taxon>
        <taxon>Tevenvirinae</taxon>
        <taxon>Tequatrovirus</taxon>
    </lineage>
</organism>
<keyword id="KW-1185">Reference proteome</keyword>
<gene>
    <name type="primary">y06O</name>
    <name type="synonym">e.4</name>
    <name type="synonym">msp5</name>
</gene>
<sequence length="130" mass="15138">MSKPSLYLPSKPLKYELKRQIISTDVLIGPVIAISFVILLIIGGVLDVMTDIDSGVIIMLMLTLPLVVPFLLVPVNWIGYWYQGRHYRKRVRDWKAQCKKIKKEHQLKLAEYEFNEIMKFVKESRCKSQS</sequence>
<name>Y06O_BPT4</name>
<organismHost>
    <name type="scientific">Escherichia coli</name>
    <dbReference type="NCBI Taxonomy" id="562"/>
</organismHost>
<proteinExistence type="predicted"/>
<feature type="chain" id="PRO_0000165146" description="Uncharacterized 15.1 kDa protein in e-segB intergenic region">
    <location>
        <begin position="1"/>
        <end position="130"/>
    </location>
</feature>
<accession>P39222</accession>
<dbReference type="EMBL" id="L13089">
    <property type="protein sequence ID" value="AAB59290.1"/>
    <property type="molecule type" value="Genomic_DNA"/>
</dbReference>
<dbReference type="EMBL" id="AF158101">
    <property type="protein sequence ID" value="AAD42572.1"/>
    <property type="molecule type" value="Genomic_DNA"/>
</dbReference>
<dbReference type="RefSeq" id="NP_049740.1">
    <property type="nucleotide sequence ID" value="NC_000866.4"/>
</dbReference>
<dbReference type="SMR" id="P39222"/>
<dbReference type="GeneID" id="1258546"/>
<dbReference type="KEGG" id="vg:1258546"/>
<dbReference type="OrthoDB" id="19155at10239"/>
<dbReference type="Proteomes" id="UP000009087">
    <property type="component" value="Segment"/>
</dbReference>